<reference key="1">
    <citation type="journal article" date="2000" name="Plant Cell Physiol.">
        <title>Characterization of gene expression of NsERFs, transcription factors of basic PR genes from Nicotiana sylvestris.</title>
        <authorList>
            <person name="Kitajima S."/>
            <person name="Koyama T."/>
            <person name="Ohme-Takagi M."/>
            <person name="Shinshi H."/>
            <person name="Sato F."/>
        </authorList>
    </citation>
    <scope>NUCLEOTIDE SEQUENCE [GENOMIC DNA]</scope>
    <scope>INDUCTION</scope>
    <scope>TISSUE SPECIFICITY</scope>
</reference>
<organism>
    <name type="scientific">Nicotiana sylvestris</name>
    <name type="common">Wood tobacco</name>
    <name type="synonym">South American tobacco</name>
    <dbReference type="NCBI Taxonomy" id="4096"/>
    <lineage>
        <taxon>Eukaryota</taxon>
        <taxon>Viridiplantae</taxon>
        <taxon>Streptophyta</taxon>
        <taxon>Embryophyta</taxon>
        <taxon>Tracheophyta</taxon>
        <taxon>Spermatophyta</taxon>
        <taxon>Magnoliopsida</taxon>
        <taxon>eudicotyledons</taxon>
        <taxon>Gunneridae</taxon>
        <taxon>Pentapetalae</taxon>
        <taxon>asterids</taxon>
        <taxon>lamiids</taxon>
        <taxon>Solanales</taxon>
        <taxon>Solanaceae</taxon>
        <taxon>Nicotianoideae</taxon>
        <taxon>Nicotianeae</taxon>
        <taxon>Nicotiana</taxon>
    </lineage>
</organism>
<protein>
    <recommendedName>
        <fullName>Ethylene-responsive transcription factor 4</fullName>
    </recommendedName>
    <alternativeName>
        <fullName>Ethylene-responsive element-binding factor 3</fullName>
        <shortName>EREBP-3</shortName>
    </alternativeName>
    <alternativeName>
        <fullName>Ethylene-responsive element-binding factor 4 homolog</fullName>
    </alternativeName>
    <alternativeName>
        <fullName>NsERF3</fullName>
    </alternativeName>
</protein>
<feature type="chain" id="PRO_0000112555" description="Ethylene-responsive transcription factor 4">
    <location>
        <begin position="1"/>
        <end position="227"/>
    </location>
</feature>
<feature type="DNA-binding region" description="AP2/ERF" evidence="3">
    <location>
        <begin position="26"/>
        <end position="83"/>
    </location>
</feature>
<feature type="region of interest" description="Disordered" evidence="4">
    <location>
        <begin position="1"/>
        <end position="25"/>
    </location>
</feature>
<feature type="region of interest" description="Disordered" evidence="4">
    <location>
        <begin position="74"/>
        <end position="111"/>
    </location>
</feature>
<feature type="short sequence motif" description="EAR-like (transcriptional repression)" evidence="2">
    <location>
        <begin position="217"/>
        <end position="223"/>
    </location>
</feature>
<feature type="compositionally biased region" description="Low complexity" evidence="4">
    <location>
        <begin position="90"/>
        <end position="105"/>
    </location>
</feature>
<comment type="function">
    <text evidence="1">Transcription factor that binds to the GCC-box pathogenesis-related promoter element. Involved in the regulation of gene expression by stress factors and by components of stress signal transduction pathways. Probably acts as a transcriptional repressor and may regulate other AtERFs (By similarity).</text>
</comment>
<comment type="subcellular location">
    <subcellularLocation>
        <location evidence="6">Nucleus</location>
    </subcellularLocation>
</comment>
<comment type="tissue specificity">
    <text evidence="5">Expressed in roots, mostly in root tip, lateral root tips, cortex and vascular tissues.</text>
</comment>
<comment type="induction">
    <text evidence="5">Strongly and quickly induced by ethylene.</text>
</comment>
<comment type="domain">
    <text evidence="1">The AP2/ERF domain binds specifically to the 5'-GCCGCC-3' motif. The affinity of this binding is higher if the seventh amino-acid of this domain is basic (By similarity).</text>
</comment>
<comment type="domain">
    <text evidence="1">Contains a slightly degenerated ERF-associated amphiphilic repression (EAR) motif, which may be involved in the activity of transcriptional repression.</text>
</comment>
<comment type="similarity">
    <text evidence="6">Belongs to the ethylene-response factor family. Class 2 subfamily.</text>
</comment>
<comment type="caution">
    <text evidence="6">Was named ERF3 but it corresponds to Arabidopsis ERF4.</text>
</comment>
<accession>Q9LW49</accession>
<name>ERF4_NICSY</name>
<proteinExistence type="evidence at transcript level"/>
<dbReference type="EMBL" id="AB016265">
    <property type="protein sequence ID" value="BAA97123.1"/>
    <property type="molecule type" value="Genomic_DNA"/>
</dbReference>
<dbReference type="SMR" id="Q9LW49"/>
<dbReference type="STRING" id="4096.Q9LW49"/>
<dbReference type="GeneID" id="104222902"/>
<dbReference type="KEGG" id="nsy:104222902"/>
<dbReference type="eggNOG" id="ENOG502RYHH">
    <property type="taxonomic scope" value="Eukaryota"/>
</dbReference>
<dbReference type="Proteomes" id="UP000189701">
    <property type="component" value="Unplaced"/>
</dbReference>
<dbReference type="GO" id="GO:0005634">
    <property type="term" value="C:nucleus"/>
    <property type="evidence" value="ECO:0007669"/>
    <property type="project" value="UniProtKB-SubCell"/>
</dbReference>
<dbReference type="GO" id="GO:0003677">
    <property type="term" value="F:DNA binding"/>
    <property type="evidence" value="ECO:0007669"/>
    <property type="project" value="UniProtKB-KW"/>
</dbReference>
<dbReference type="GO" id="GO:0003700">
    <property type="term" value="F:DNA-binding transcription factor activity"/>
    <property type="evidence" value="ECO:0007669"/>
    <property type="project" value="InterPro"/>
</dbReference>
<dbReference type="GO" id="GO:0006952">
    <property type="term" value="P:defense response"/>
    <property type="evidence" value="ECO:0007669"/>
    <property type="project" value="UniProtKB-KW"/>
</dbReference>
<dbReference type="GO" id="GO:0009873">
    <property type="term" value="P:ethylene-activated signaling pathway"/>
    <property type="evidence" value="ECO:0007669"/>
    <property type="project" value="UniProtKB-KW"/>
</dbReference>
<dbReference type="CDD" id="cd00018">
    <property type="entry name" value="AP2"/>
    <property type="match status" value="1"/>
</dbReference>
<dbReference type="FunFam" id="3.30.730.10:FF:000001">
    <property type="entry name" value="Ethylene-responsive transcription factor 2"/>
    <property type="match status" value="1"/>
</dbReference>
<dbReference type="Gene3D" id="3.30.730.10">
    <property type="entry name" value="AP2/ERF domain"/>
    <property type="match status" value="1"/>
</dbReference>
<dbReference type="InterPro" id="IPR001471">
    <property type="entry name" value="AP2/ERF_dom"/>
</dbReference>
<dbReference type="InterPro" id="IPR036955">
    <property type="entry name" value="AP2/ERF_dom_sf"/>
</dbReference>
<dbReference type="InterPro" id="IPR016177">
    <property type="entry name" value="DNA-bd_dom_sf"/>
</dbReference>
<dbReference type="PANTHER" id="PTHR31677">
    <property type="entry name" value="AP2 DOMAIN CLASS TRANSCRIPTION FACTOR"/>
    <property type="match status" value="1"/>
</dbReference>
<dbReference type="PANTHER" id="PTHR31677:SF242">
    <property type="entry name" value="ETHYLENE-RESPONSIVE TRANSCRIPTION FACTOR 4"/>
    <property type="match status" value="1"/>
</dbReference>
<dbReference type="Pfam" id="PF00847">
    <property type="entry name" value="AP2"/>
    <property type="match status" value="1"/>
</dbReference>
<dbReference type="PRINTS" id="PR00367">
    <property type="entry name" value="ETHRSPELEMNT"/>
</dbReference>
<dbReference type="SMART" id="SM00380">
    <property type="entry name" value="AP2"/>
    <property type="match status" value="1"/>
</dbReference>
<dbReference type="SUPFAM" id="SSF54171">
    <property type="entry name" value="DNA-binding domain"/>
    <property type="match status" value="1"/>
</dbReference>
<dbReference type="PROSITE" id="PS51032">
    <property type="entry name" value="AP2_ERF"/>
    <property type="match status" value="1"/>
</dbReference>
<sequence>MAVKNKVSNGDLKGGNVKTNGVKEVHYRGVRKRPWGRYAAEIRDPGKKSRVWLGTFDTAEEAAKAYDTAAREFRGPKAKTNFPLPSENQSTSHSSTMESSSGETGIHAPPHAPLELDLTRRLGSVAADGGDNCRRSGEVGYPIFHQQPTVAVLPNGQPVLLFDSLWRPGVVNRPQPYHVMPMAMGFNGVNAGVDPTVSDSSSVVEENQYDGKRGIDLDLNLAPPTEF</sequence>
<gene>
    <name type="primary">ERF4</name>
    <name type="synonym">ERF-3</name>
    <name type="synonym">ERF3</name>
</gene>
<keyword id="KW-0238">DNA-binding</keyword>
<keyword id="KW-0936">Ethylene signaling pathway</keyword>
<keyword id="KW-0539">Nucleus</keyword>
<keyword id="KW-0611">Plant defense</keyword>
<keyword id="KW-1185">Reference proteome</keyword>
<keyword id="KW-0678">Repressor</keyword>
<keyword id="KW-0804">Transcription</keyword>
<keyword id="KW-0805">Transcription regulation</keyword>
<evidence type="ECO:0000250" key="1"/>
<evidence type="ECO:0000255" key="2"/>
<evidence type="ECO:0000255" key="3">
    <source>
        <dbReference type="PROSITE-ProRule" id="PRU00366"/>
    </source>
</evidence>
<evidence type="ECO:0000256" key="4">
    <source>
        <dbReference type="SAM" id="MobiDB-lite"/>
    </source>
</evidence>
<evidence type="ECO:0000269" key="5">
    <source>
    </source>
</evidence>
<evidence type="ECO:0000305" key="6"/>